<comment type="function">
    <text evidence="1">Component of the sulfite reductase complex that catalyzes the 6-electron reduction of sulfite to sulfide. This is one of several activities required for the biosynthesis of L-cysteine from sulfate. The flavoprotein component catalyzes the electron flow from NADPH -&gt; FAD -&gt; FMN to the hemoprotein component.</text>
</comment>
<comment type="catalytic activity">
    <reaction evidence="1">
        <text>hydrogen sulfide + 3 NADP(+) + 3 H2O = sulfite + 3 NADPH + 4 H(+)</text>
        <dbReference type="Rhea" id="RHEA:13801"/>
        <dbReference type="ChEBI" id="CHEBI:15377"/>
        <dbReference type="ChEBI" id="CHEBI:15378"/>
        <dbReference type="ChEBI" id="CHEBI:17359"/>
        <dbReference type="ChEBI" id="CHEBI:29919"/>
        <dbReference type="ChEBI" id="CHEBI:57783"/>
        <dbReference type="ChEBI" id="CHEBI:58349"/>
        <dbReference type="EC" id="1.8.1.2"/>
    </reaction>
</comment>
<comment type="cofactor">
    <cofactor evidence="1">
        <name>FAD</name>
        <dbReference type="ChEBI" id="CHEBI:57692"/>
    </cofactor>
    <text evidence="1">Binds 1 FAD per subunit.</text>
</comment>
<comment type="cofactor">
    <cofactor evidence="1">
        <name>FMN</name>
        <dbReference type="ChEBI" id="CHEBI:58210"/>
    </cofactor>
    <text evidence="1">Binds 1 FMN per subunit.</text>
</comment>
<comment type="pathway">
    <text evidence="1">Sulfur metabolism; hydrogen sulfide biosynthesis; hydrogen sulfide from sulfite (NADPH route): step 1/1.</text>
</comment>
<comment type="subunit">
    <text evidence="1">Alpha(8)-beta(8). The alpha component is a flavoprotein, the beta component is a hemoprotein.</text>
</comment>
<comment type="similarity">
    <text evidence="1">Belongs to the NADPH-dependent sulphite reductase flavoprotein subunit CysJ family.</text>
</comment>
<comment type="similarity">
    <text evidence="1">In the N-terminal section; belongs to the flavodoxin family.</text>
</comment>
<comment type="similarity">
    <text evidence="1">In the C-terminal section; belongs to the flavoprotein pyridine nucleotide cytochrome reductase family.</text>
</comment>
<organism>
    <name type="scientific">Salmonella arizonae (strain ATCC BAA-731 / CDC346-86 / RSK2980)</name>
    <dbReference type="NCBI Taxonomy" id="41514"/>
    <lineage>
        <taxon>Bacteria</taxon>
        <taxon>Pseudomonadati</taxon>
        <taxon>Pseudomonadota</taxon>
        <taxon>Gammaproteobacteria</taxon>
        <taxon>Enterobacterales</taxon>
        <taxon>Enterobacteriaceae</taxon>
        <taxon>Salmonella</taxon>
    </lineage>
</organism>
<protein>
    <recommendedName>
        <fullName evidence="1">Sulfite reductase [NADPH] flavoprotein alpha-component</fullName>
        <shortName evidence="1">SiR-FP</shortName>
        <ecNumber evidence="1">1.8.1.2</ecNumber>
    </recommendedName>
</protein>
<proteinExistence type="inferred from homology"/>
<feature type="chain" id="PRO_1000087639" description="Sulfite reductase [NADPH] flavoprotein alpha-component">
    <location>
        <begin position="1"/>
        <end position="599"/>
    </location>
</feature>
<feature type="domain" description="Flavodoxin-like" evidence="1">
    <location>
        <begin position="64"/>
        <end position="202"/>
    </location>
</feature>
<feature type="domain" description="FAD-binding FR-type" evidence="1">
    <location>
        <begin position="234"/>
        <end position="448"/>
    </location>
</feature>
<feature type="binding site" evidence="1">
    <location>
        <begin position="70"/>
        <end position="75"/>
    </location>
    <ligand>
        <name>FMN</name>
        <dbReference type="ChEBI" id="CHEBI:58210"/>
    </ligand>
</feature>
<feature type="binding site" evidence="1">
    <location>
        <begin position="117"/>
        <end position="120"/>
    </location>
    <ligand>
        <name>FMN</name>
        <dbReference type="ChEBI" id="CHEBI:58210"/>
    </ligand>
</feature>
<feature type="binding site" evidence="1">
    <location>
        <begin position="153"/>
        <end position="162"/>
    </location>
    <ligand>
        <name>FMN</name>
        <dbReference type="ChEBI" id="CHEBI:58210"/>
    </ligand>
</feature>
<feature type="binding site" evidence="1">
    <location>
        <position position="322"/>
    </location>
    <ligand>
        <name>FAD</name>
        <dbReference type="ChEBI" id="CHEBI:57692"/>
    </ligand>
</feature>
<feature type="binding site" evidence="1">
    <location>
        <position position="356"/>
    </location>
    <ligand>
        <name>FAD</name>
        <dbReference type="ChEBI" id="CHEBI:57692"/>
    </ligand>
</feature>
<feature type="binding site" evidence="1">
    <location>
        <begin position="386"/>
        <end position="389"/>
    </location>
    <ligand>
        <name>FAD</name>
        <dbReference type="ChEBI" id="CHEBI:57692"/>
    </ligand>
</feature>
<feature type="binding site" evidence="1">
    <location>
        <begin position="404"/>
        <end position="406"/>
    </location>
    <ligand>
        <name>FAD</name>
        <dbReference type="ChEBI" id="CHEBI:57692"/>
    </ligand>
</feature>
<feature type="binding site" evidence="1">
    <location>
        <position position="410"/>
    </location>
    <ligand>
        <name>FAD</name>
        <dbReference type="ChEBI" id="CHEBI:57692"/>
    </ligand>
</feature>
<feature type="binding site" evidence="1">
    <location>
        <begin position="419"/>
        <end position="422"/>
    </location>
    <ligand>
        <name>FAD</name>
        <dbReference type="ChEBI" id="CHEBI:57692"/>
    </ligand>
</feature>
<feature type="binding site" evidence="1">
    <location>
        <begin position="519"/>
        <end position="520"/>
    </location>
    <ligand>
        <name>NADP(+)</name>
        <dbReference type="ChEBI" id="CHEBI:58349"/>
    </ligand>
</feature>
<feature type="binding site" evidence="1">
    <location>
        <begin position="525"/>
        <end position="529"/>
    </location>
    <ligand>
        <name>NADP(+)</name>
        <dbReference type="ChEBI" id="CHEBI:58349"/>
    </ligand>
</feature>
<feature type="binding site" evidence="1">
    <location>
        <position position="561"/>
    </location>
    <ligand>
        <name>NADP(+)</name>
        <dbReference type="ChEBI" id="CHEBI:58349"/>
    </ligand>
</feature>
<feature type="binding site" evidence="1">
    <location>
        <position position="599"/>
    </location>
    <ligand>
        <name>FAD</name>
        <dbReference type="ChEBI" id="CHEBI:57692"/>
    </ligand>
</feature>
<name>CYSJ_SALAR</name>
<keyword id="KW-0028">Amino-acid biosynthesis</keyword>
<keyword id="KW-0198">Cysteine biosynthesis</keyword>
<keyword id="KW-0249">Electron transport</keyword>
<keyword id="KW-0274">FAD</keyword>
<keyword id="KW-0285">Flavoprotein</keyword>
<keyword id="KW-0288">FMN</keyword>
<keyword id="KW-0521">NADP</keyword>
<keyword id="KW-0560">Oxidoreductase</keyword>
<keyword id="KW-1185">Reference proteome</keyword>
<keyword id="KW-0813">Transport</keyword>
<evidence type="ECO:0000255" key="1">
    <source>
        <dbReference type="HAMAP-Rule" id="MF_01541"/>
    </source>
</evidence>
<reference key="1">
    <citation type="submission" date="2007-11" db="EMBL/GenBank/DDBJ databases">
        <authorList>
            <consortium name="The Salmonella enterica serovar Arizonae Genome Sequencing Project"/>
            <person name="McClelland M."/>
            <person name="Sanderson E.K."/>
            <person name="Porwollik S."/>
            <person name="Spieth J."/>
            <person name="Clifton W.S."/>
            <person name="Fulton R."/>
            <person name="Chunyan W."/>
            <person name="Wollam A."/>
            <person name="Shah N."/>
            <person name="Pepin K."/>
            <person name="Bhonagiri V."/>
            <person name="Nash W."/>
            <person name="Johnson M."/>
            <person name="Thiruvilangam P."/>
            <person name="Wilson R."/>
        </authorList>
    </citation>
    <scope>NUCLEOTIDE SEQUENCE [LARGE SCALE GENOMIC DNA]</scope>
    <source>
        <strain>ATCC BAA-731 / CDC346-86 / RSK2980</strain>
    </source>
</reference>
<accession>A9MF16</accession>
<gene>
    <name evidence="1" type="primary">cysJ</name>
    <name type="ordered locus">SARI_00014</name>
</gene>
<dbReference type="EC" id="1.8.1.2" evidence="1"/>
<dbReference type="EMBL" id="CP000880">
    <property type="protein sequence ID" value="ABX19968.1"/>
    <property type="molecule type" value="Genomic_DNA"/>
</dbReference>
<dbReference type="SMR" id="A9MF16"/>
<dbReference type="STRING" id="41514.SARI_00014"/>
<dbReference type="KEGG" id="ses:SARI_00014"/>
<dbReference type="HOGENOM" id="CLU_001570_17_7_6"/>
<dbReference type="UniPathway" id="UPA00140">
    <property type="reaction ID" value="UER00207"/>
</dbReference>
<dbReference type="Proteomes" id="UP000002084">
    <property type="component" value="Chromosome"/>
</dbReference>
<dbReference type="GO" id="GO:0005829">
    <property type="term" value="C:cytosol"/>
    <property type="evidence" value="ECO:0007669"/>
    <property type="project" value="TreeGrafter"/>
</dbReference>
<dbReference type="GO" id="GO:0050660">
    <property type="term" value="F:flavin adenine dinucleotide binding"/>
    <property type="evidence" value="ECO:0007669"/>
    <property type="project" value="InterPro"/>
</dbReference>
<dbReference type="GO" id="GO:0010181">
    <property type="term" value="F:FMN binding"/>
    <property type="evidence" value="ECO:0007669"/>
    <property type="project" value="InterPro"/>
</dbReference>
<dbReference type="GO" id="GO:0004783">
    <property type="term" value="F:sulfite reductase (NADPH) activity"/>
    <property type="evidence" value="ECO:0007669"/>
    <property type="project" value="UniProtKB-UniRule"/>
</dbReference>
<dbReference type="GO" id="GO:0019344">
    <property type="term" value="P:cysteine biosynthetic process"/>
    <property type="evidence" value="ECO:0007669"/>
    <property type="project" value="UniProtKB-KW"/>
</dbReference>
<dbReference type="GO" id="GO:0070814">
    <property type="term" value="P:hydrogen sulfide biosynthetic process"/>
    <property type="evidence" value="ECO:0007669"/>
    <property type="project" value="UniProtKB-UniRule"/>
</dbReference>
<dbReference type="GO" id="GO:0000103">
    <property type="term" value="P:sulfate assimilation"/>
    <property type="evidence" value="ECO:0007669"/>
    <property type="project" value="UniProtKB-UniRule"/>
</dbReference>
<dbReference type="CDD" id="cd06199">
    <property type="entry name" value="SiR"/>
    <property type="match status" value="1"/>
</dbReference>
<dbReference type="FunFam" id="3.40.50.80:FF:000001">
    <property type="entry name" value="NADPH--cytochrome P450 reductase 1"/>
    <property type="match status" value="1"/>
</dbReference>
<dbReference type="FunFam" id="1.20.990.10:FF:000004">
    <property type="entry name" value="Sulfite reductase [NADPH] flavoprotein alpha-component"/>
    <property type="match status" value="1"/>
</dbReference>
<dbReference type="FunFam" id="3.40.50.360:FF:000018">
    <property type="entry name" value="Sulfite reductase [NADPH] flavoprotein alpha-component"/>
    <property type="match status" value="1"/>
</dbReference>
<dbReference type="Gene3D" id="3.40.50.360">
    <property type="match status" value="1"/>
</dbReference>
<dbReference type="Gene3D" id="1.20.990.10">
    <property type="entry name" value="NADPH-cytochrome p450 Reductase, Chain A, domain 3"/>
    <property type="match status" value="1"/>
</dbReference>
<dbReference type="Gene3D" id="3.40.50.80">
    <property type="entry name" value="Nucleotide-binding domain of ferredoxin-NADP reductase (FNR) module"/>
    <property type="match status" value="1"/>
</dbReference>
<dbReference type="Gene3D" id="2.40.30.10">
    <property type="entry name" value="Translation factors"/>
    <property type="match status" value="1"/>
</dbReference>
<dbReference type="HAMAP" id="MF_01541">
    <property type="entry name" value="CysJ"/>
    <property type="match status" value="1"/>
</dbReference>
<dbReference type="InterPro" id="IPR010199">
    <property type="entry name" value="CysJ"/>
</dbReference>
<dbReference type="InterPro" id="IPR003097">
    <property type="entry name" value="CysJ-like_FAD-binding"/>
</dbReference>
<dbReference type="InterPro" id="IPR029758">
    <property type="entry name" value="CysJ_Proteobact"/>
</dbReference>
<dbReference type="InterPro" id="IPR017927">
    <property type="entry name" value="FAD-bd_FR_type"/>
</dbReference>
<dbReference type="InterPro" id="IPR001094">
    <property type="entry name" value="Flavdoxin-like"/>
</dbReference>
<dbReference type="InterPro" id="IPR008254">
    <property type="entry name" value="Flavodoxin/NO_synth"/>
</dbReference>
<dbReference type="InterPro" id="IPR001709">
    <property type="entry name" value="Flavoprot_Pyr_Nucl_cyt_Rdtase"/>
</dbReference>
<dbReference type="InterPro" id="IPR029039">
    <property type="entry name" value="Flavoprotein-like_sf"/>
</dbReference>
<dbReference type="InterPro" id="IPR039261">
    <property type="entry name" value="FNR_nucleotide-bd"/>
</dbReference>
<dbReference type="InterPro" id="IPR023173">
    <property type="entry name" value="NADPH_Cyt_P450_Rdtase_alpha"/>
</dbReference>
<dbReference type="InterPro" id="IPR001433">
    <property type="entry name" value="OxRdtase_FAD/NAD-bd"/>
</dbReference>
<dbReference type="InterPro" id="IPR017938">
    <property type="entry name" value="Riboflavin_synthase-like_b-brl"/>
</dbReference>
<dbReference type="NCBIfam" id="TIGR01931">
    <property type="entry name" value="cysJ"/>
    <property type="match status" value="1"/>
</dbReference>
<dbReference type="NCBIfam" id="NF008197">
    <property type="entry name" value="PRK10953.1"/>
    <property type="match status" value="1"/>
</dbReference>
<dbReference type="PANTHER" id="PTHR19384:SF128">
    <property type="entry name" value="NADPH OXIDOREDUCTASE A"/>
    <property type="match status" value="1"/>
</dbReference>
<dbReference type="PANTHER" id="PTHR19384">
    <property type="entry name" value="NITRIC OXIDE SYNTHASE-RELATED"/>
    <property type="match status" value="1"/>
</dbReference>
<dbReference type="Pfam" id="PF00667">
    <property type="entry name" value="FAD_binding_1"/>
    <property type="match status" value="2"/>
</dbReference>
<dbReference type="Pfam" id="PF00258">
    <property type="entry name" value="Flavodoxin_1"/>
    <property type="match status" value="1"/>
</dbReference>
<dbReference type="Pfam" id="PF00175">
    <property type="entry name" value="NAD_binding_1"/>
    <property type="match status" value="1"/>
</dbReference>
<dbReference type="PIRSF" id="PIRSF000207">
    <property type="entry name" value="SiR-FP_CysJ"/>
    <property type="match status" value="1"/>
</dbReference>
<dbReference type="PRINTS" id="PR00369">
    <property type="entry name" value="FLAVODOXIN"/>
</dbReference>
<dbReference type="PRINTS" id="PR00371">
    <property type="entry name" value="FPNCR"/>
</dbReference>
<dbReference type="SUPFAM" id="SSF52343">
    <property type="entry name" value="Ferredoxin reductase-like, C-terminal NADP-linked domain"/>
    <property type="match status" value="1"/>
</dbReference>
<dbReference type="SUPFAM" id="SSF52218">
    <property type="entry name" value="Flavoproteins"/>
    <property type="match status" value="1"/>
</dbReference>
<dbReference type="SUPFAM" id="SSF63380">
    <property type="entry name" value="Riboflavin synthase domain-like"/>
    <property type="match status" value="1"/>
</dbReference>
<dbReference type="PROSITE" id="PS51384">
    <property type="entry name" value="FAD_FR"/>
    <property type="match status" value="1"/>
</dbReference>
<dbReference type="PROSITE" id="PS50902">
    <property type="entry name" value="FLAVODOXIN_LIKE"/>
    <property type="match status" value="1"/>
</dbReference>
<sequence>MTTQAPLTGLLPLNPQQLARLQAATTDFTPEQLAWVSGYFWGVLNPRSGADAVARAPERGSLGITLISASQTGNARRVAEALRDDLLAVNLNVNLVNAGDYKFKQIACEKLLVVVTSTQGEGEPPEEAVALHKFLFSKKAPRLNNTAFAVFSLGDTSYEFFCQAGKDFDNKLAELGGERLLDRVDADVEYQTVAAQWRARIVDVLKSRTPVTTPVPSVVSGAVNEIHTSPYTKEAPLRASLSVNQKITGRNSEKDVRHIEIDLGDSGLCYQPGDALGVWYQNDPALVKEIVELLWLKGDEPVAVDGKLLPLTEALQWHFELTVNTAGIVENYATLTRSEFLLPLVGDKAQLQHYAAATPIADMLRFSPSQLDADALVGLLRPLTPRLYSIASSQAEVENEVHLTVGVVRYDIEGRARAGGASSFLADRVDDEGEVRVFIEHNDNFRLPTNPETPIIMIGSGTGIAPFRAFIQQRAADEASGKNWLFFGNPHFTEDFLYQVEWQRYVKEGLLSRIDLAWSRDQKEKIYVQDKLRERGAELWRWINDGAHIYVCGDANRMAKDVEQALLEVIVEFGGMDLESADEYLSELRVARRYQRDVY</sequence>